<name>PYRB_RHOCS</name>
<keyword id="KW-0665">Pyrimidine biosynthesis</keyword>
<keyword id="KW-1185">Reference proteome</keyword>
<keyword id="KW-0808">Transferase</keyword>
<comment type="function">
    <text evidence="1">Catalyzes the condensation of carbamoyl phosphate and aspartate to form carbamoyl aspartate and inorganic phosphate, the committed step in the de novo pyrimidine nucleotide biosynthesis pathway.</text>
</comment>
<comment type="catalytic activity">
    <reaction evidence="1">
        <text>carbamoyl phosphate + L-aspartate = N-carbamoyl-L-aspartate + phosphate + H(+)</text>
        <dbReference type="Rhea" id="RHEA:20013"/>
        <dbReference type="ChEBI" id="CHEBI:15378"/>
        <dbReference type="ChEBI" id="CHEBI:29991"/>
        <dbReference type="ChEBI" id="CHEBI:32814"/>
        <dbReference type="ChEBI" id="CHEBI:43474"/>
        <dbReference type="ChEBI" id="CHEBI:58228"/>
        <dbReference type="EC" id="2.1.3.2"/>
    </reaction>
</comment>
<comment type="pathway">
    <text evidence="1">Pyrimidine metabolism; UMP biosynthesis via de novo pathway; (S)-dihydroorotate from bicarbonate: step 2/3.</text>
</comment>
<comment type="subunit">
    <text evidence="1">Heterododecamer (2C3:3R2) of six catalytic PyrB chains organized as two trimers (C3), and six regulatory PyrI chains organized as three dimers (R2).</text>
</comment>
<comment type="similarity">
    <text evidence="1">Belongs to the aspartate/ornithine carbamoyltransferase superfamily. ATCase family.</text>
</comment>
<organism>
    <name type="scientific">Rhodospirillum centenum (strain ATCC 51521 / SW)</name>
    <dbReference type="NCBI Taxonomy" id="414684"/>
    <lineage>
        <taxon>Bacteria</taxon>
        <taxon>Pseudomonadati</taxon>
        <taxon>Pseudomonadota</taxon>
        <taxon>Alphaproteobacteria</taxon>
        <taxon>Rhodospirillales</taxon>
        <taxon>Rhodospirillaceae</taxon>
        <taxon>Rhodospirillum</taxon>
    </lineage>
</organism>
<protein>
    <recommendedName>
        <fullName evidence="1">Aspartate carbamoyltransferase catalytic subunit</fullName>
        <ecNumber evidence="1">2.1.3.2</ecNumber>
    </recommendedName>
    <alternativeName>
        <fullName evidence="1">Aspartate transcarbamylase</fullName>
        <shortName evidence="1">ATCase</shortName>
    </alternativeName>
</protein>
<evidence type="ECO:0000255" key="1">
    <source>
        <dbReference type="HAMAP-Rule" id="MF_00001"/>
    </source>
</evidence>
<feature type="chain" id="PRO_1000088792" description="Aspartate carbamoyltransferase catalytic subunit">
    <location>
        <begin position="1"/>
        <end position="318"/>
    </location>
</feature>
<feature type="binding site" evidence="1">
    <location>
        <position position="64"/>
    </location>
    <ligand>
        <name>carbamoyl phosphate</name>
        <dbReference type="ChEBI" id="CHEBI:58228"/>
    </ligand>
</feature>
<feature type="binding site" evidence="1">
    <location>
        <position position="65"/>
    </location>
    <ligand>
        <name>carbamoyl phosphate</name>
        <dbReference type="ChEBI" id="CHEBI:58228"/>
    </ligand>
</feature>
<feature type="binding site" evidence="1">
    <location>
        <position position="92"/>
    </location>
    <ligand>
        <name>L-aspartate</name>
        <dbReference type="ChEBI" id="CHEBI:29991"/>
    </ligand>
</feature>
<feature type="binding site" evidence="1">
    <location>
        <position position="114"/>
    </location>
    <ligand>
        <name>carbamoyl phosphate</name>
        <dbReference type="ChEBI" id="CHEBI:58228"/>
    </ligand>
</feature>
<feature type="binding site" evidence="1">
    <location>
        <position position="142"/>
    </location>
    <ligand>
        <name>carbamoyl phosphate</name>
        <dbReference type="ChEBI" id="CHEBI:58228"/>
    </ligand>
</feature>
<feature type="binding site" evidence="1">
    <location>
        <position position="145"/>
    </location>
    <ligand>
        <name>carbamoyl phosphate</name>
        <dbReference type="ChEBI" id="CHEBI:58228"/>
    </ligand>
</feature>
<feature type="binding site" evidence="1">
    <location>
        <position position="175"/>
    </location>
    <ligand>
        <name>L-aspartate</name>
        <dbReference type="ChEBI" id="CHEBI:29991"/>
    </ligand>
</feature>
<feature type="binding site" evidence="1">
    <location>
        <position position="229"/>
    </location>
    <ligand>
        <name>L-aspartate</name>
        <dbReference type="ChEBI" id="CHEBI:29991"/>
    </ligand>
</feature>
<feature type="binding site" evidence="1">
    <location>
        <position position="270"/>
    </location>
    <ligand>
        <name>carbamoyl phosphate</name>
        <dbReference type="ChEBI" id="CHEBI:58228"/>
    </ligand>
</feature>
<feature type="binding site" evidence="1">
    <location>
        <position position="271"/>
    </location>
    <ligand>
        <name>carbamoyl phosphate</name>
        <dbReference type="ChEBI" id="CHEBI:58228"/>
    </ligand>
</feature>
<accession>B6IN31</accession>
<gene>
    <name evidence="1" type="primary">pyrB</name>
    <name type="ordered locus">RC1_1524</name>
</gene>
<proteinExistence type="inferred from homology"/>
<dbReference type="EC" id="2.1.3.2" evidence="1"/>
<dbReference type="EMBL" id="CP000613">
    <property type="protein sequence ID" value="ACI98928.1"/>
    <property type="molecule type" value="Genomic_DNA"/>
</dbReference>
<dbReference type="SMR" id="B6IN31"/>
<dbReference type="STRING" id="414684.RC1_1524"/>
<dbReference type="KEGG" id="rce:RC1_1524"/>
<dbReference type="eggNOG" id="COG0540">
    <property type="taxonomic scope" value="Bacteria"/>
</dbReference>
<dbReference type="HOGENOM" id="CLU_043846_2_0_5"/>
<dbReference type="OrthoDB" id="9774690at2"/>
<dbReference type="UniPathway" id="UPA00070">
    <property type="reaction ID" value="UER00116"/>
</dbReference>
<dbReference type="Proteomes" id="UP000001591">
    <property type="component" value="Chromosome"/>
</dbReference>
<dbReference type="GO" id="GO:0005829">
    <property type="term" value="C:cytosol"/>
    <property type="evidence" value="ECO:0007669"/>
    <property type="project" value="TreeGrafter"/>
</dbReference>
<dbReference type="GO" id="GO:0016597">
    <property type="term" value="F:amino acid binding"/>
    <property type="evidence" value="ECO:0007669"/>
    <property type="project" value="InterPro"/>
</dbReference>
<dbReference type="GO" id="GO:0004070">
    <property type="term" value="F:aspartate carbamoyltransferase activity"/>
    <property type="evidence" value="ECO:0007669"/>
    <property type="project" value="UniProtKB-UniRule"/>
</dbReference>
<dbReference type="GO" id="GO:0006207">
    <property type="term" value="P:'de novo' pyrimidine nucleobase biosynthetic process"/>
    <property type="evidence" value="ECO:0007669"/>
    <property type="project" value="InterPro"/>
</dbReference>
<dbReference type="GO" id="GO:0044205">
    <property type="term" value="P:'de novo' UMP biosynthetic process"/>
    <property type="evidence" value="ECO:0007669"/>
    <property type="project" value="UniProtKB-UniRule"/>
</dbReference>
<dbReference type="GO" id="GO:0006520">
    <property type="term" value="P:amino acid metabolic process"/>
    <property type="evidence" value="ECO:0007669"/>
    <property type="project" value="InterPro"/>
</dbReference>
<dbReference type="FunFam" id="3.40.50.1370:FF:000007">
    <property type="entry name" value="Aspartate carbamoyltransferase"/>
    <property type="match status" value="1"/>
</dbReference>
<dbReference type="Gene3D" id="3.40.50.1370">
    <property type="entry name" value="Aspartate/ornithine carbamoyltransferase"/>
    <property type="match status" value="2"/>
</dbReference>
<dbReference type="HAMAP" id="MF_00001">
    <property type="entry name" value="Asp_carb_tr"/>
    <property type="match status" value="1"/>
</dbReference>
<dbReference type="InterPro" id="IPR006132">
    <property type="entry name" value="Asp/Orn_carbamoyltranf_P-bd"/>
</dbReference>
<dbReference type="InterPro" id="IPR006130">
    <property type="entry name" value="Asp/Orn_carbamoylTrfase"/>
</dbReference>
<dbReference type="InterPro" id="IPR036901">
    <property type="entry name" value="Asp/Orn_carbamoylTrfase_sf"/>
</dbReference>
<dbReference type="InterPro" id="IPR002082">
    <property type="entry name" value="Asp_carbamoyltransf"/>
</dbReference>
<dbReference type="InterPro" id="IPR006131">
    <property type="entry name" value="Asp_carbamoyltransf_Asp/Orn-bd"/>
</dbReference>
<dbReference type="NCBIfam" id="TIGR00670">
    <property type="entry name" value="asp_carb_tr"/>
    <property type="match status" value="1"/>
</dbReference>
<dbReference type="NCBIfam" id="NF002032">
    <property type="entry name" value="PRK00856.1"/>
    <property type="match status" value="1"/>
</dbReference>
<dbReference type="PANTHER" id="PTHR45753:SF6">
    <property type="entry name" value="ASPARTATE CARBAMOYLTRANSFERASE"/>
    <property type="match status" value="1"/>
</dbReference>
<dbReference type="PANTHER" id="PTHR45753">
    <property type="entry name" value="ORNITHINE CARBAMOYLTRANSFERASE, MITOCHONDRIAL"/>
    <property type="match status" value="1"/>
</dbReference>
<dbReference type="Pfam" id="PF00185">
    <property type="entry name" value="OTCace"/>
    <property type="match status" value="1"/>
</dbReference>
<dbReference type="Pfam" id="PF02729">
    <property type="entry name" value="OTCace_N"/>
    <property type="match status" value="1"/>
</dbReference>
<dbReference type="PRINTS" id="PR00100">
    <property type="entry name" value="AOTCASE"/>
</dbReference>
<dbReference type="PRINTS" id="PR00101">
    <property type="entry name" value="ATCASE"/>
</dbReference>
<dbReference type="SUPFAM" id="SSF53671">
    <property type="entry name" value="Aspartate/ornithine carbamoyltransferase"/>
    <property type="match status" value="1"/>
</dbReference>
<dbReference type="PROSITE" id="PS00097">
    <property type="entry name" value="CARBAMOYLTRANSFERASE"/>
    <property type="match status" value="1"/>
</dbReference>
<sequence length="318" mass="34646">MDTQDMTAFPHRHLLGIEGLTATDVELILDLADGYVEQNRSPGRKSAILSGLTVVNLFFENSTRTRTSFELAAKRLGGDCINMSSDGSSVKKGESLIDTAMTLNAMHLDVLVVRHQESGAPLLLSSKVNCAVINAGDGAHEHPTQALLDALTIRRHKGTLRGLTVAICGDILHSRVARSNIHLLNIMGARVRVVAPPTLLPGAVDRLGVEVHHSMATGLKDADIVMMLRLQLERMQGQYLPSQREYFRFYGLDYDKLAVARPDALIMHPGPMNRGVEIDSLVADDIHRSVILEQVELGVAVRMACLDLLTRGHRGTGA</sequence>
<reference key="1">
    <citation type="submission" date="2007-03" db="EMBL/GenBank/DDBJ databases">
        <title>Genome sequence of Rhodospirillum centenum.</title>
        <authorList>
            <person name="Touchman J.W."/>
            <person name="Bauer C."/>
            <person name="Blankenship R.E."/>
        </authorList>
    </citation>
    <scope>NUCLEOTIDE SEQUENCE [LARGE SCALE GENOMIC DNA]</scope>
    <source>
        <strain>ATCC 51521 / SW</strain>
    </source>
</reference>